<organism>
    <name type="scientific">Porphyromonas gingivalis (strain ATCC BAA-308 / W83)</name>
    <dbReference type="NCBI Taxonomy" id="242619"/>
    <lineage>
        <taxon>Bacteria</taxon>
        <taxon>Pseudomonadati</taxon>
        <taxon>Bacteroidota</taxon>
        <taxon>Bacteroidia</taxon>
        <taxon>Bacteroidales</taxon>
        <taxon>Porphyromonadaceae</taxon>
        <taxon>Porphyromonas</taxon>
    </lineage>
</organism>
<comment type="function">
    <text evidence="1">Involved in the gluconeogenesis. Catalyzes the conversion of oxaloacetate (OAA) to phosphoenolpyruvate (PEP) through direct phosphoryl transfer between the nucleoside triphosphate and OAA.</text>
</comment>
<comment type="catalytic activity">
    <reaction evidence="1">
        <text>oxaloacetate + ATP = phosphoenolpyruvate + ADP + CO2</text>
        <dbReference type="Rhea" id="RHEA:18617"/>
        <dbReference type="ChEBI" id="CHEBI:16452"/>
        <dbReference type="ChEBI" id="CHEBI:16526"/>
        <dbReference type="ChEBI" id="CHEBI:30616"/>
        <dbReference type="ChEBI" id="CHEBI:58702"/>
        <dbReference type="ChEBI" id="CHEBI:456216"/>
        <dbReference type="EC" id="4.1.1.49"/>
    </reaction>
</comment>
<comment type="cofactor">
    <cofactor evidence="1">
        <name>Mn(2+)</name>
        <dbReference type="ChEBI" id="CHEBI:29035"/>
    </cofactor>
    <text evidence="1">Binds 1 Mn(2+) ion per subunit.</text>
</comment>
<comment type="pathway">
    <text evidence="1">Carbohydrate biosynthesis; gluconeogenesis.</text>
</comment>
<comment type="subcellular location">
    <subcellularLocation>
        <location evidence="1">Cytoplasm</location>
    </subcellularLocation>
</comment>
<comment type="similarity">
    <text evidence="1">Belongs to the phosphoenolpyruvate carboxykinase (ATP) family.</text>
</comment>
<name>PCKA_PORGI</name>
<sequence>MSKLDLTKYGILNATEIIHNPSYEFLFEEETKAGLEGFEKGQLTELGAVNVMTGVYTGRSPKDKFFVMDDTTKNTIWWTSDEYKNDNKPVTPEAWKSIKKLAVEQLSGKRLFVVDTFCGANESSRLKIRFIMEVAWQAHFVKNMFIRPTEEELANYGEPDFVVMTASKAKVENYKELGLNSETAVVFNLTEKVQVILNTWYGGEMKKGMFSYMNYLLPLRGMASMHCSANTSMDEKETAIFFGLSGTGKTTLSTDPKRKLIGDDEHGWDKDGIFNFEGGCYAKVINLSRENEPDIYNAIRRNALLENVTVDAAGKIDFGDKSVTENTRVSYPIYHIENIVKPVSKAGHAKKVIFLSADAFGVLPPVSILTPEQTKYYFLSGFTAKLAGTERGITEPTPTFSACFGAAFLSLHPTKYAEELVKKMEMVGATAYLVNTGWNGTGKRISIKDTRGIIDAILDGSIDKAPTKAIPFFDFKVPTALPGVDPNILDPRDTYADAAEWTTKAKDLAERFIKNFVKFTGNDAGKALVAAGPKL</sequence>
<accession>Q7MU78</accession>
<gene>
    <name evidence="1" type="primary">pckA</name>
    <name type="ordered locus">PG_1676</name>
</gene>
<dbReference type="EC" id="4.1.1.49" evidence="1"/>
<dbReference type="EMBL" id="AE015924">
    <property type="protein sequence ID" value="AAQ66693.1"/>
    <property type="molecule type" value="Genomic_DNA"/>
</dbReference>
<dbReference type="RefSeq" id="WP_005873499.1">
    <property type="nucleotide sequence ID" value="NC_002950.2"/>
</dbReference>
<dbReference type="SMR" id="Q7MU78"/>
<dbReference type="STRING" id="242619.PG_1676"/>
<dbReference type="EnsemblBacteria" id="AAQ66693">
    <property type="protein sequence ID" value="AAQ66693"/>
    <property type="gene ID" value="PG_1676"/>
</dbReference>
<dbReference type="KEGG" id="pgi:PG_1676"/>
<dbReference type="eggNOG" id="COG1866">
    <property type="taxonomic scope" value="Bacteria"/>
</dbReference>
<dbReference type="HOGENOM" id="CLU_018247_0_1_10"/>
<dbReference type="UniPathway" id="UPA00138"/>
<dbReference type="PHI-base" id="PHI:8383"/>
<dbReference type="Proteomes" id="UP000000588">
    <property type="component" value="Chromosome"/>
</dbReference>
<dbReference type="GO" id="GO:0005829">
    <property type="term" value="C:cytosol"/>
    <property type="evidence" value="ECO:0007669"/>
    <property type="project" value="TreeGrafter"/>
</dbReference>
<dbReference type="GO" id="GO:0005524">
    <property type="term" value="F:ATP binding"/>
    <property type="evidence" value="ECO:0007669"/>
    <property type="project" value="UniProtKB-UniRule"/>
</dbReference>
<dbReference type="GO" id="GO:0046872">
    <property type="term" value="F:metal ion binding"/>
    <property type="evidence" value="ECO:0007669"/>
    <property type="project" value="UniProtKB-KW"/>
</dbReference>
<dbReference type="GO" id="GO:0004612">
    <property type="term" value="F:phosphoenolpyruvate carboxykinase (ATP) activity"/>
    <property type="evidence" value="ECO:0007669"/>
    <property type="project" value="UniProtKB-UniRule"/>
</dbReference>
<dbReference type="GO" id="GO:0006094">
    <property type="term" value="P:gluconeogenesis"/>
    <property type="evidence" value="ECO:0007669"/>
    <property type="project" value="UniProtKB-UniRule"/>
</dbReference>
<dbReference type="CDD" id="cd00484">
    <property type="entry name" value="PEPCK_ATP"/>
    <property type="match status" value="1"/>
</dbReference>
<dbReference type="FunFam" id="2.170.8.10:FF:000001">
    <property type="entry name" value="Phosphoenolpyruvate carboxykinase (ATP)"/>
    <property type="match status" value="1"/>
</dbReference>
<dbReference type="FunFam" id="3.40.449.10:FF:000001">
    <property type="entry name" value="Phosphoenolpyruvate carboxykinase (ATP)"/>
    <property type="match status" value="1"/>
</dbReference>
<dbReference type="Gene3D" id="3.90.228.20">
    <property type="match status" value="1"/>
</dbReference>
<dbReference type="Gene3D" id="3.40.449.10">
    <property type="entry name" value="Phosphoenolpyruvate Carboxykinase, domain 1"/>
    <property type="match status" value="1"/>
</dbReference>
<dbReference type="Gene3D" id="2.170.8.10">
    <property type="entry name" value="Phosphoenolpyruvate Carboxykinase, domain 2"/>
    <property type="match status" value="1"/>
</dbReference>
<dbReference type="HAMAP" id="MF_00453">
    <property type="entry name" value="PEPCK_ATP"/>
    <property type="match status" value="1"/>
</dbReference>
<dbReference type="InterPro" id="IPR001272">
    <property type="entry name" value="PEP_carboxykinase_ATP"/>
</dbReference>
<dbReference type="InterPro" id="IPR013035">
    <property type="entry name" value="PEP_carboxykinase_C"/>
</dbReference>
<dbReference type="InterPro" id="IPR008210">
    <property type="entry name" value="PEP_carboxykinase_N"/>
</dbReference>
<dbReference type="InterPro" id="IPR015994">
    <property type="entry name" value="PEPCK_ATP_CS"/>
</dbReference>
<dbReference type="NCBIfam" id="TIGR00224">
    <property type="entry name" value="pckA"/>
    <property type="match status" value="1"/>
</dbReference>
<dbReference type="NCBIfam" id="NF006819">
    <property type="entry name" value="PRK09344.1-1"/>
    <property type="match status" value="1"/>
</dbReference>
<dbReference type="NCBIfam" id="NF006820">
    <property type="entry name" value="PRK09344.1-2"/>
    <property type="match status" value="1"/>
</dbReference>
<dbReference type="NCBIfam" id="NF006821">
    <property type="entry name" value="PRK09344.1-3"/>
    <property type="match status" value="1"/>
</dbReference>
<dbReference type="PANTHER" id="PTHR30031:SF0">
    <property type="entry name" value="PHOSPHOENOLPYRUVATE CARBOXYKINASE (ATP)"/>
    <property type="match status" value="1"/>
</dbReference>
<dbReference type="PANTHER" id="PTHR30031">
    <property type="entry name" value="PHOSPHOENOLPYRUVATE CARBOXYKINASE ATP"/>
    <property type="match status" value="1"/>
</dbReference>
<dbReference type="Pfam" id="PF01293">
    <property type="entry name" value="PEPCK_ATP"/>
    <property type="match status" value="1"/>
</dbReference>
<dbReference type="PIRSF" id="PIRSF006294">
    <property type="entry name" value="PEP_crbxkin"/>
    <property type="match status" value="1"/>
</dbReference>
<dbReference type="SUPFAM" id="SSF68923">
    <property type="entry name" value="PEP carboxykinase N-terminal domain"/>
    <property type="match status" value="1"/>
</dbReference>
<dbReference type="SUPFAM" id="SSF53795">
    <property type="entry name" value="PEP carboxykinase-like"/>
    <property type="match status" value="1"/>
</dbReference>
<dbReference type="PROSITE" id="PS00532">
    <property type="entry name" value="PEPCK_ATP"/>
    <property type="match status" value="1"/>
</dbReference>
<evidence type="ECO:0000255" key="1">
    <source>
        <dbReference type="HAMAP-Rule" id="MF_00453"/>
    </source>
</evidence>
<proteinExistence type="inferred from homology"/>
<feature type="chain" id="PRO_0000203832" description="Phosphoenolpyruvate carboxykinase (ATP)">
    <location>
        <begin position="1"/>
        <end position="535"/>
    </location>
</feature>
<feature type="binding site" evidence="1">
    <location>
        <position position="59"/>
    </location>
    <ligand>
        <name>substrate</name>
    </ligand>
</feature>
<feature type="binding site" evidence="1">
    <location>
        <position position="201"/>
    </location>
    <ligand>
        <name>substrate</name>
    </ligand>
</feature>
<feature type="binding site" evidence="1">
    <location>
        <position position="207"/>
    </location>
    <ligand>
        <name>ATP</name>
        <dbReference type="ChEBI" id="CHEBI:30616"/>
    </ligand>
</feature>
<feature type="binding site" evidence="1">
    <location>
        <position position="207"/>
    </location>
    <ligand>
        <name>Mn(2+)</name>
        <dbReference type="ChEBI" id="CHEBI:29035"/>
    </ligand>
</feature>
<feature type="binding site" evidence="1">
    <location>
        <position position="207"/>
    </location>
    <ligand>
        <name>substrate</name>
    </ligand>
</feature>
<feature type="binding site" evidence="1">
    <location>
        <position position="226"/>
    </location>
    <ligand>
        <name>ATP</name>
        <dbReference type="ChEBI" id="CHEBI:30616"/>
    </ligand>
</feature>
<feature type="binding site" evidence="1">
    <location>
        <position position="226"/>
    </location>
    <ligand>
        <name>Mn(2+)</name>
        <dbReference type="ChEBI" id="CHEBI:29035"/>
    </ligand>
</feature>
<feature type="binding site" evidence="1">
    <location>
        <begin position="243"/>
        <end position="251"/>
    </location>
    <ligand>
        <name>ATP</name>
        <dbReference type="ChEBI" id="CHEBI:30616"/>
    </ligand>
</feature>
<feature type="binding site" evidence="1">
    <location>
        <position position="264"/>
    </location>
    <ligand>
        <name>Mn(2+)</name>
        <dbReference type="ChEBI" id="CHEBI:29035"/>
    </ligand>
</feature>
<feature type="binding site" evidence="1">
    <location>
        <position position="292"/>
    </location>
    <ligand>
        <name>ATP</name>
        <dbReference type="ChEBI" id="CHEBI:30616"/>
    </ligand>
</feature>
<feature type="binding site" evidence="1">
    <location>
        <position position="328"/>
    </location>
    <ligand>
        <name>ATP</name>
        <dbReference type="ChEBI" id="CHEBI:30616"/>
    </ligand>
</feature>
<feature type="binding site" evidence="1">
    <location>
        <position position="328"/>
    </location>
    <ligand>
        <name>substrate</name>
    </ligand>
</feature>
<feature type="binding site" evidence="1">
    <location>
        <begin position="444"/>
        <end position="445"/>
    </location>
    <ligand>
        <name>ATP</name>
        <dbReference type="ChEBI" id="CHEBI:30616"/>
    </ligand>
</feature>
<feature type="binding site" evidence="1">
    <location>
        <position position="450"/>
    </location>
    <ligand>
        <name>ATP</name>
        <dbReference type="ChEBI" id="CHEBI:30616"/>
    </ligand>
</feature>
<keyword id="KW-0067">ATP-binding</keyword>
<keyword id="KW-0963">Cytoplasm</keyword>
<keyword id="KW-0210">Decarboxylase</keyword>
<keyword id="KW-0312">Gluconeogenesis</keyword>
<keyword id="KW-0456">Lyase</keyword>
<keyword id="KW-0464">Manganese</keyword>
<keyword id="KW-0479">Metal-binding</keyword>
<keyword id="KW-0547">Nucleotide-binding</keyword>
<keyword id="KW-1185">Reference proteome</keyword>
<protein>
    <recommendedName>
        <fullName evidence="1">Phosphoenolpyruvate carboxykinase (ATP)</fullName>
        <shortName evidence="1">PCK</shortName>
        <shortName evidence="1">PEP carboxykinase</shortName>
        <shortName evidence="1">PEPCK</shortName>
        <ecNumber evidence="1">4.1.1.49</ecNumber>
    </recommendedName>
</protein>
<reference key="1">
    <citation type="journal article" date="2003" name="J. Bacteriol.">
        <title>Complete genome sequence of the oral pathogenic bacterium Porphyromonas gingivalis strain W83.</title>
        <authorList>
            <person name="Nelson K.E."/>
            <person name="Fleischmann R.D."/>
            <person name="DeBoy R.T."/>
            <person name="Paulsen I.T."/>
            <person name="Fouts D.E."/>
            <person name="Eisen J.A."/>
            <person name="Daugherty S.C."/>
            <person name="Dodson R.J."/>
            <person name="Durkin A.S."/>
            <person name="Gwinn M.L."/>
            <person name="Haft D.H."/>
            <person name="Kolonay J.F."/>
            <person name="Nelson W.C."/>
            <person name="Mason T.M."/>
            <person name="Tallon L."/>
            <person name="Gray J."/>
            <person name="Granger D."/>
            <person name="Tettelin H."/>
            <person name="Dong H."/>
            <person name="Galvin J.L."/>
            <person name="Duncan M.J."/>
            <person name="Dewhirst F.E."/>
            <person name="Fraser C.M."/>
        </authorList>
    </citation>
    <scope>NUCLEOTIDE SEQUENCE [LARGE SCALE GENOMIC DNA]</scope>
    <source>
        <strain>ATCC BAA-308 / W83</strain>
    </source>
</reference>